<sequence length="341" mass="36933">MTERKRNLRPVRDVAPPTLQFRTVHGYRRAFRIAGSGPAILLIHGIGDNSTTWNGVHAKLAQRFTVIAPDLLGHGQSDKPRADYSVAAYANGMRDLLSVLDIERVTIVGHSLGGGVAMQFAYQFPQLVDRLILVSAGGVTKDVNIVFRLASLPMGSEAMALLRLPLVLPAVQIAGRIVGKAIGTTSLGHDLPNVLRILDDLPEPTASAAFGRTLRAVVDWRGQMVTMLDRCYLTEAIPVQIIWGTKDVVLPVRHAHMAHAAMPGSQLEIFEGSGHFPFHDDPARFIDIVERFMDTTEPAEYDQAALRALLRRGGGEATVTGSADTRVAVLNAIGSNERSAT</sequence>
<dbReference type="EMBL" id="LT708304">
    <property type="protein sequence ID" value="SIU01352.1"/>
    <property type="molecule type" value="Genomic_DNA"/>
</dbReference>
<dbReference type="RefSeq" id="NP_856380.1">
    <property type="nucleotide sequence ID" value="NC_002945.3"/>
</dbReference>
<dbReference type="RefSeq" id="WP_003900558.1">
    <property type="nucleotide sequence ID" value="NC_002945.4"/>
</dbReference>
<dbReference type="SMR" id="P0A573"/>
<dbReference type="ESTHER" id="myctu-YR15">
    <property type="family name" value="Epoxide_hydrolase"/>
</dbReference>
<dbReference type="KEGG" id="mbo:BQ2027_MB2734"/>
<dbReference type="PATRIC" id="fig|233413.5.peg.2996"/>
<dbReference type="Proteomes" id="UP000001419">
    <property type="component" value="Chromosome"/>
</dbReference>
<dbReference type="GO" id="GO:0016020">
    <property type="term" value="C:membrane"/>
    <property type="evidence" value="ECO:0007669"/>
    <property type="project" value="TreeGrafter"/>
</dbReference>
<dbReference type="GO" id="GO:0047372">
    <property type="term" value="F:monoacylglycerol lipase activity"/>
    <property type="evidence" value="ECO:0007669"/>
    <property type="project" value="TreeGrafter"/>
</dbReference>
<dbReference type="GO" id="GO:0046464">
    <property type="term" value="P:acylglycerol catabolic process"/>
    <property type="evidence" value="ECO:0007669"/>
    <property type="project" value="TreeGrafter"/>
</dbReference>
<dbReference type="FunFam" id="3.40.50.1820:FF:000327">
    <property type="entry name" value="Alpha/beta hydrolase"/>
    <property type="match status" value="1"/>
</dbReference>
<dbReference type="Gene3D" id="3.40.50.1820">
    <property type="entry name" value="alpha/beta hydrolase"/>
    <property type="match status" value="1"/>
</dbReference>
<dbReference type="InterPro" id="IPR000073">
    <property type="entry name" value="AB_hydrolase_1"/>
</dbReference>
<dbReference type="InterPro" id="IPR029058">
    <property type="entry name" value="AB_hydrolase_fold"/>
</dbReference>
<dbReference type="InterPro" id="IPR050266">
    <property type="entry name" value="AB_hydrolase_sf"/>
</dbReference>
<dbReference type="InterPro" id="IPR000639">
    <property type="entry name" value="Epox_hydrolase-like"/>
</dbReference>
<dbReference type="PANTHER" id="PTHR43798:SF33">
    <property type="entry name" value="HYDROLASE, PUTATIVE (AFU_ORTHOLOGUE AFUA_2G14860)-RELATED"/>
    <property type="match status" value="1"/>
</dbReference>
<dbReference type="PANTHER" id="PTHR43798">
    <property type="entry name" value="MONOACYLGLYCEROL LIPASE"/>
    <property type="match status" value="1"/>
</dbReference>
<dbReference type="Pfam" id="PF00561">
    <property type="entry name" value="Abhydrolase_1"/>
    <property type="match status" value="1"/>
</dbReference>
<dbReference type="PRINTS" id="PR00111">
    <property type="entry name" value="ABHYDROLASE"/>
</dbReference>
<dbReference type="PRINTS" id="PR00412">
    <property type="entry name" value="EPOXHYDRLASE"/>
</dbReference>
<dbReference type="SUPFAM" id="SSF53474">
    <property type="entry name" value="alpha/beta-Hydrolases"/>
    <property type="match status" value="1"/>
</dbReference>
<accession>P0A573</accession>
<accession>A0A1R3Y201</accession>
<accession>O07214</accession>
<accession>P28176</accession>
<accession>X2BLN7</accession>
<keyword id="KW-0378">Hydrolase</keyword>
<keyword id="KW-1185">Reference proteome</keyword>
<name>Y2734_MYCBO</name>
<protein>
    <recommendedName>
        <fullName>Uncharacterized protein Mb2734</fullName>
    </recommendedName>
</protein>
<gene>
    <name type="ordered locus">BQ2027_MB2734</name>
</gene>
<evidence type="ECO:0000250" key="1"/>
<evidence type="ECO:0000305" key="2"/>
<reference key="1">
    <citation type="journal article" date="2003" name="Proc. Natl. Acad. Sci. U.S.A.">
        <title>The complete genome sequence of Mycobacterium bovis.</title>
        <authorList>
            <person name="Garnier T."/>
            <person name="Eiglmeier K."/>
            <person name="Camus J.-C."/>
            <person name="Medina N."/>
            <person name="Mansoor H."/>
            <person name="Pryor M."/>
            <person name="Duthoy S."/>
            <person name="Grondin S."/>
            <person name="Lacroix C."/>
            <person name="Monsempe C."/>
            <person name="Simon S."/>
            <person name="Harris B."/>
            <person name="Atkin R."/>
            <person name="Doggett J."/>
            <person name="Mayes R."/>
            <person name="Keating L."/>
            <person name="Wheeler P.R."/>
            <person name="Parkhill J."/>
            <person name="Barrell B.G."/>
            <person name="Cole S.T."/>
            <person name="Gordon S.V."/>
            <person name="Hewinson R.G."/>
        </authorList>
    </citation>
    <scope>NUCLEOTIDE SEQUENCE [LARGE SCALE GENOMIC DNA]</scope>
    <source>
        <strain>ATCC BAA-935 / AF2122/97</strain>
    </source>
</reference>
<reference key="2">
    <citation type="journal article" date="2017" name="Genome Announc.">
        <title>Updated reference genome sequence and annotation of Mycobacterium bovis AF2122/97.</title>
        <authorList>
            <person name="Malone K.M."/>
            <person name="Farrell D."/>
            <person name="Stuber T.P."/>
            <person name="Schubert O.T."/>
            <person name="Aebersold R."/>
            <person name="Robbe-Austerman S."/>
            <person name="Gordon S.V."/>
        </authorList>
    </citation>
    <scope>NUCLEOTIDE SEQUENCE [LARGE SCALE GENOMIC DNA]</scope>
    <scope>GENOME REANNOTATION</scope>
    <source>
        <strain>ATCC BAA-935 / AF2122/97</strain>
    </source>
</reference>
<proteinExistence type="inferred from homology"/>
<comment type="similarity">
    <text evidence="2">Belongs to the DmpD/TodF/XylF esterase family.</text>
</comment>
<feature type="chain" id="PRO_0000207083" description="Uncharacterized protein Mb2734">
    <location>
        <begin position="1"/>
        <end position="341"/>
    </location>
</feature>
<feature type="active site" evidence="1">
    <location>
        <position position="111"/>
    </location>
</feature>
<feature type="active site" evidence="1">
    <location>
        <position position="247"/>
    </location>
</feature>
<feature type="active site" evidence="1">
    <location>
        <position position="275"/>
    </location>
</feature>
<organism>
    <name type="scientific">Mycobacterium bovis (strain ATCC BAA-935 / AF2122/97)</name>
    <dbReference type="NCBI Taxonomy" id="233413"/>
    <lineage>
        <taxon>Bacteria</taxon>
        <taxon>Bacillati</taxon>
        <taxon>Actinomycetota</taxon>
        <taxon>Actinomycetes</taxon>
        <taxon>Mycobacteriales</taxon>
        <taxon>Mycobacteriaceae</taxon>
        <taxon>Mycobacterium</taxon>
        <taxon>Mycobacterium tuberculosis complex</taxon>
    </lineage>
</organism>